<gene>
    <name evidence="1" type="primary">rplA</name>
    <name type="ordered locus">PG_0391</name>
</gene>
<organism>
    <name type="scientific">Porphyromonas gingivalis (strain ATCC BAA-308 / W83)</name>
    <dbReference type="NCBI Taxonomy" id="242619"/>
    <lineage>
        <taxon>Bacteria</taxon>
        <taxon>Pseudomonadati</taxon>
        <taxon>Bacteroidota</taxon>
        <taxon>Bacteroidia</taxon>
        <taxon>Bacteroidales</taxon>
        <taxon>Porphyromonadaceae</taxon>
        <taxon>Porphyromonas</taxon>
    </lineage>
</organism>
<accession>Q7MX30</accession>
<protein>
    <recommendedName>
        <fullName evidence="1">Large ribosomal subunit protein uL1</fullName>
    </recommendedName>
    <alternativeName>
        <fullName evidence="2">50S ribosomal protein L1</fullName>
    </alternativeName>
</protein>
<proteinExistence type="inferred from homology"/>
<keyword id="KW-1185">Reference proteome</keyword>
<keyword id="KW-0678">Repressor</keyword>
<keyword id="KW-0687">Ribonucleoprotein</keyword>
<keyword id="KW-0689">Ribosomal protein</keyword>
<keyword id="KW-0694">RNA-binding</keyword>
<keyword id="KW-0699">rRNA-binding</keyword>
<keyword id="KW-0810">Translation regulation</keyword>
<keyword id="KW-0820">tRNA-binding</keyword>
<evidence type="ECO:0000255" key="1">
    <source>
        <dbReference type="HAMAP-Rule" id="MF_01318"/>
    </source>
</evidence>
<evidence type="ECO:0000305" key="2"/>
<feature type="chain" id="PRO_0000125708" description="Large ribosomal subunit protein uL1">
    <location>
        <begin position="1"/>
        <end position="232"/>
    </location>
</feature>
<reference key="1">
    <citation type="journal article" date="2003" name="J. Bacteriol.">
        <title>Complete genome sequence of the oral pathogenic bacterium Porphyromonas gingivalis strain W83.</title>
        <authorList>
            <person name="Nelson K.E."/>
            <person name="Fleischmann R.D."/>
            <person name="DeBoy R.T."/>
            <person name="Paulsen I.T."/>
            <person name="Fouts D.E."/>
            <person name="Eisen J.A."/>
            <person name="Daugherty S.C."/>
            <person name="Dodson R.J."/>
            <person name="Durkin A.S."/>
            <person name="Gwinn M.L."/>
            <person name="Haft D.H."/>
            <person name="Kolonay J.F."/>
            <person name="Nelson W.C."/>
            <person name="Mason T.M."/>
            <person name="Tallon L."/>
            <person name="Gray J."/>
            <person name="Granger D."/>
            <person name="Tettelin H."/>
            <person name="Dong H."/>
            <person name="Galvin J.L."/>
            <person name="Duncan M.J."/>
            <person name="Dewhirst F.E."/>
            <person name="Fraser C.M."/>
        </authorList>
    </citation>
    <scope>NUCLEOTIDE SEQUENCE [LARGE SCALE GENOMIC DNA]</scope>
    <source>
        <strain>ATCC BAA-308 / W83</strain>
    </source>
</reference>
<sequence>MSKLTKKQKLAFSKIEPGKAYTISEASALVKEITTTNFDASVDIDVRLGVDPRKANQMVRGVVTLPHGTGKQIRVLALCSPDKEAEAKEAGADYVGLDEYIEKIKAGWTDIDVIITMPAIMGKIGALGRVLGPRGLMPNPKSGTVTNDVGAAVKEVKAGKIDFKVDKTGIVHTSIGKVSFSADQIRDNAREFINTIIKLKPTTAKGTYIKSIYLSSTMSFGIKVDPKTVDEN</sequence>
<comment type="function">
    <text evidence="1">Binds directly to 23S rRNA. The L1 stalk is quite mobile in the ribosome, and is involved in E site tRNA release.</text>
</comment>
<comment type="function">
    <text evidence="1">Protein L1 is also a translational repressor protein, it controls the translation of the L11 operon by binding to its mRNA.</text>
</comment>
<comment type="subunit">
    <text evidence="1">Part of the 50S ribosomal subunit.</text>
</comment>
<comment type="similarity">
    <text evidence="1">Belongs to the universal ribosomal protein uL1 family.</text>
</comment>
<name>RL1_PORGI</name>
<dbReference type="EMBL" id="AE015924">
    <property type="protein sequence ID" value="AAQ65596.1"/>
    <property type="molecule type" value="Genomic_DNA"/>
</dbReference>
<dbReference type="RefSeq" id="WP_004584918.1">
    <property type="nucleotide sequence ID" value="NC_002950.2"/>
</dbReference>
<dbReference type="SMR" id="Q7MX30"/>
<dbReference type="STRING" id="242619.PG_0391"/>
<dbReference type="EnsemblBacteria" id="AAQ65596">
    <property type="protein sequence ID" value="AAQ65596"/>
    <property type="gene ID" value="PG_0391"/>
</dbReference>
<dbReference type="GeneID" id="29256748"/>
<dbReference type="KEGG" id="pgi:PG_0391"/>
<dbReference type="eggNOG" id="COG0081">
    <property type="taxonomic scope" value="Bacteria"/>
</dbReference>
<dbReference type="HOGENOM" id="CLU_062853_0_0_10"/>
<dbReference type="Proteomes" id="UP000000588">
    <property type="component" value="Chromosome"/>
</dbReference>
<dbReference type="GO" id="GO:0015934">
    <property type="term" value="C:large ribosomal subunit"/>
    <property type="evidence" value="ECO:0007669"/>
    <property type="project" value="InterPro"/>
</dbReference>
<dbReference type="GO" id="GO:0019843">
    <property type="term" value="F:rRNA binding"/>
    <property type="evidence" value="ECO:0007669"/>
    <property type="project" value="UniProtKB-UniRule"/>
</dbReference>
<dbReference type="GO" id="GO:0003735">
    <property type="term" value="F:structural constituent of ribosome"/>
    <property type="evidence" value="ECO:0007669"/>
    <property type="project" value="InterPro"/>
</dbReference>
<dbReference type="GO" id="GO:0000049">
    <property type="term" value="F:tRNA binding"/>
    <property type="evidence" value="ECO:0007669"/>
    <property type="project" value="UniProtKB-KW"/>
</dbReference>
<dbReference type="GO" id="GO:0006417">
    <property type="term" value="P:regulation of translation"/>
    <property type="evidence" value="ECO:0007669"/>
    <property type="project" value="UniProtKB-KW"/>
</dbReference>
<dbReference type="GO" id="GO:0006412">
    <property type="term" value="P:translation"/>
    <property type="evidence" value="ECO:0007669"/>
    <property type="project" value="UniProtKB-UniRule"/>
</dbReference>
<dbReference type="CDD" id="cd00403">
    <property type="entry name" value="Ribosomal_L1"/>
    <property type="match status" value="1"/>
</dbReference>
<dbReference type="FunFam" id="3.40.50.790:FF:000001">
    <property type="entry name" value="50S ribosomal protein L1"/>
    <property type="match status" value="1"/>
</dbReference>
<dbReference type="Gene3D" id="3.30.190.20">
    <property type="match status" value="1"/>
</dbReference>
<dbReference type="Gene3D" id="3.40.50.790">
    <property type="match status" value="1"/>
</dbReference>
<dbReference type="HAMAP" id="MF_01318_B">
    <property type="entry name" value="Ribosomal_uL1_B"/>
    <property type="match status" value="1"/>
</dbReference>
<dbReference type="InterPro" id="IPR005878">
    <property type="entry name" value="Ribosom_uL1_bac-type"/>
</dbReference>
<dbReference type="InterPro" id="IPR002143">
    <property type="entry name" value="Ribosomal_uL1"/>
</dbReference>
<dbReference type="InterPro" id="IPR023674">
    <property type="entry name" value="Ribosomal_uL1-like"/>
</dbReference>
<dbReference type="InterPro" id="IPR028364">
    <property type="entry name" value="Ribosomal_uL1/biogenesis"/>
</dbReference>
<dbReference type="InterPro" id="IPR016095">
    <property type="entry name" value="Ribosomal_uL1_3-a/b-sand"/>
</dbReference>
<dbReference type="InterPro" id="IPR023673">
    <property type="entry name" value="Ribosomal_uL1_CS"/>
</dbReference>
<dbReference type="NCBIfam" id="TIGR01169">
    <property type="entry name" value="rplA_bact"/>
    <property type="match status" value="1"/>
</dbReference>
<dbReference type="PANTHER" id="PTHR36427">
    <property type="entry name" value="54S RIBOSOMAL PROTEIN L1, MITOCHONDRIAL"/>
    <property type="match status" value="1"/>
</dbReference>
<dbReference type="PANTHER" id="PTHR36427:SF3">
    <property type="entry name" value="LARGE RIBOSOMAL SUBUNIT PROTEIN UL1M"/>
    <property type="match status" value="1"/>
</dbReference>
<dbReference type="Pfam" id="PF00687">
    <property type="entry name" value="Ribosomal_L1"/>
    <property type="match status" value="1"/>
</dbReference>
<dbReference type="PIRSF" id="PIRSF002155">
    <property type="entry name" value="Ribosomal_L1"/>
    <property type="match status" value="1"/>
</dbReference>
<dbReference type="SUPFAM" id="SSF56808">
    <property type="entry name" value="Ribosomal protein L1"/>
    <property type="match status" value="1"/>
</dbReference>
<dbReference type="PROSITE" id="PS01199">
    <property type="entry name" value="RIBOSOMAL_L1"/>
    <property type="match status" value="1"/>
</dbReference>